<proteinExistence type="inferred from homology"/>
<accession>Q971S9</accession>
<accession>F9VP05</accession>
<reference key="1">
    <citation type="journal article" date="2001" name="DNA Res.">
        <title>Complete genome sequence of an aerobic thermoacidophilic Crenarchaeon, Sulfolobus tokodaii strain7.</title>
        <authorList>
            <person name="Kawarabayasi Y."/>
            <person name="Hino Y."/>
            <person name="Horikawa H."/>
            <person name="Jin-no K."/>
            <person name="Takahashi M."/>
            <person name="Sekine M."/>
            <person name="Baba S."/>
            <person name="Ankai A."/>
            <person name="Kosugi H."/>
            <person name="Hosoyama A."/>
            <person name="Fukui S."/>
            <person name="Nagai Y."/>
            <person name="Nishijima K."/>
            <person name="Otsuka R."/>
            <person name="Nakazawa H."/>
            <person name="Takamiya M."/>
            <person name="Kato Y."/>
            <person name="Yoshizawa T."/>
            <person name="Tanaka T."/>
            <person name="Kudoh Y."/>
            <person name="Yamazaki J."/>
            <person name="Kushida N."/>
            <person name="Oguchi A."/>
            <person name="Aoki K."/>
            <person name="Masuda S."/>
            <person name="Yanagii M."/>
            <person name="Nishimura M."/>
            <person name="Yamagishi A."/>
            <person name="Oshima T."/>
            <person name="Kikuchi H."/>
        </authorList>
    </citation>
    <scope>NUCLEOTIDE SEQUENCE [LARGE SCALE GENOMIC DNA]</scope>
    <source>
        <strain>DSM 16993 / JCM 10545 / NBRC 100140 / 7</strain>
    </source>
</reference>
<keyword id="KW-0963">Cytoplasm</keyword>
<keyword id="KW-0342">GTP-binding</keyword>
<keyword id="KW-0378">Hydrolase</keyword>
<keyword id="KW-0547">Nucleotide-binding</keyword>
<keyword id="KW-1185">Reference proteome</keyword>
<keyword id="KW-0687">Ribonucleoprotein</keyword>
<keyword id="KW-0694">RNA-binding</keyword>
<keyword id="KW-0733">Signal recognition particle</keyword>
<evidence type="ECO:0000255" key="1">
    <source>
        <dbReference type="HAMAP-Rule" id="MF_00306"/>
    </source>
</evidence>
<feature type="chain" id="PRO_0000101188" description="Signal recognition particle 54 kDa protein">
    <location>
        <begin position="1"/>
        <end position="445"/>
    </location>
</feature>
<feature type="binding site" evidence="1">
    <location>
        <begin position="102"/>
        <end position="109"/>
    </location>
    <ligand>
        <name>GTP</name>
        <dbReference type="ChEBI" id="CHEBI:37565"/>
    </ligand>
</feature>
<feature type="binding site" evidence="1">
    <location>
        <begin position="184"/>
        <end position="188"/>
    </location>
    <ligand>
        <name>GTP</name>
        <dbReference type="ChEBI" id="CHEBI:37565"/>
    </ligand>
</feature>
<feature type="binding site" evidence="1">
    <location>
        <begin position="244"/>
        <end position="247"/>
    </location>
    <ligand>
        <name>GTP</name>
        <dbReference type="ChEBI" id="CHEBI:37565"/>
    </ligand>
</feature>
<comment type="function">
    <text evidence="1">Involved in targeting and insertion of nascent membrane proteins into the cytoplasmic membrane. Binds to the hydrophobic signal sequence of the ribosome-nascent chain (RNC) as it emerges from the ribosomes. The SRP-RNC complex is then targeted to the cytoplasmic membrane where it interacts with the SRP receptor FtsY.</text>
</comment>
<comment type="catalytic activity">
    <reaction evidence="1">
        <text>GTP + H2O = GDP + phosphate + H(+)</text>
        <dbReference type="Rhea" id="RHEA:19669"/>
        <dbReference type="ChEBI" id="CHEBI:15377"/>
        <dbReference type="ChEBI" id="CHEBI:15378"/>
        <dbReference type="ChEBI" id="CHEBI:37565"/>
        <dbReference type="ChEBI" id="CHEBI:43474"/>
        <dbReference type="ChEBI" id="CHEBI:58189"/>
        <dbReference type="EC" id="3.6.5.4"/>
    </reaction>
</comment>
<comment type="subunit">
    <text evidence="1">Part of the signal recognition particle protein translocation system, which is composed of SRP and FtsY. Archaeal SRP consists of a 7S RNA molecule of 300 nucleotides and two protein subunits: SRP54 and SRP19.</text>
</comment>
<comment type="subcellular location">
    <subcellularLocation>
        <location evidence="1">Cytoplasm</location>
    </subcellularLocation>
    <text evidence="1">The SRP-RNC complex is targeted to the cytoplasmic membrane.</text>
</comment>
<comment type="domain">
    <text evidence="1">Composed of three domains: the N-terminal N domain, which is responsible for interactions with the ribosome, the central G domain, which binds GTP, and the C-terminal M domain, which binds the RNA and the signal sequence of the RNC.</text>
</comment>
<comment type="similarity">
    <text evidence="1">Belongs to the GTP-binding SRP family. SRP54 subfamily.</text>
</comment>
<name>SRP54_SULTO</name>
<sequence>MLDNLKDAVRKFLGSSNYDKAVNDFIKELQISLIKSDVNVKLVSNLTQKIKDRLEKEKPPTAIERREWFISIVYDELSKLFGGDINPEVMPKKIPYVIMLVGVQGSGKTTTAGKLALFYKKKGYKVGLVAADVYRPAAYDQLVQIGKQINVPVYGEPNNTDAVGIAKRGVEKFLSEKYDIIIVDTAGRHGYGEEVKLLEEMKNMYSEIKPDEVILVIDASIGQKAYDLASRFHQASPIGSIIVTKMDGTAKGGGALSAVAATGAAIKFIGTGEKLDELEVFNPRRFVSRILGMGDIESIIEKIKGMEEYEQIQKKMEEVMSGKAKLTLRDIYKQLTALRKMGPLNKILQMLPGFGVFSQIPEEQLKLGEEKIKKFLVIMNSMTYKELDNPSIIDKSRIRRIAKGSGTSPEEVKELLKQYQVTNNLLKMVKRRKGLAKLFEDRNSK</sequence>
<protein>
    <recommendedName>
        <fullName evidence="1">Signal recognition particle 54 kDa protein</fullName>
        <shortName evidence="1">SRP54</shortName>
        <ecNumber evidence="1">3.6.5.4</ecNumber>
    </recommendedName>
</protein>
<dbReference type="EC" id="3.6.5.4" evidence="1"/>
<dbReference type="EMBL" id="BA000023">
    <property type="protein sequence ID" value="BAK54513.1"/>
    <property type="molecule type" value="Genomic_DNA"/>
</dbReference>
<dbReference type="RefSeq" id="WP_010979319.1">
    <property type="nucleotide sequence ID" value="NC_003106.2"/>
</dbReference>
<dbReference type="SMR" id="Q971S9"/>
<dbReference type="STRING" id="273063.STK_12970"/>
<dbReference type="GeneID" id="1459299"/>
<dbReference type="KEGG" id="sto:STK_12970"/>
<dbReference type="PATRIC" id="fig|273063.9.peg.1458"/>
<dbReference type="eggNOG" id="arCOG01228">
    <property type="taxonomic scope" value="Archaea"/>
</dbReference>
<dbReference type="OrthoDB" id="52849at2157"/>
<dbReference type="Proteomes" id="UP000001015">
    <property type="component" value="Chromosome"/>
</dbReference>
<dbReference type="GO" id="GO:0048500">
    <property type="term" value="C:signal recognition particle"/>
    <property type="evidence" value="ECO:0007669"/>
    <property type="project" value="UniProtKB-UniRule"/>
</dbReference>
<dbReference type="GO" id="GO:0008312">
    <property type="term" value="F:7S RNA binding"/>
    <property type="evidence" value="ECO:0007669"/>
    <property type="project" value="UniProtKB-UniRule"/>
</dbReference>
<dbReference type="GO" id="GO:0016887">
    <property type="term" value="F:ATP hydrolysis activity"/>
    <property type="evidence" value="ECO:0007669"/>
    <property type="project" value="InterPro"/>
</dbReference>
<dbReference type="GO" id="GO:0005525">
    <property type="term" value="F:GTP binding"/>
    <property type="evidence" value="ECO:0007669"/>
    <property type="project" value="UniProtKB-UniRule"/>
</dbReference>
<dbReference type="GO" id="GO:0003924">
    <property type="term" value="F:GTPase activity"/>
    <property type="evidence" value="ECO:0007669"/>
    <property type="project" value="UniProtKB-UniRule"/>
</dbReference>
<dbReference type="GO" id="GO:0006614">
    <property type="term" value="P:SRP-dependent cotranslational protein targeting to membrane"/>
    <property type="evidence" value="ECO:0007669"/>
    <property type="project" value="InterPro"/>
</dbReference>
<dbReference type="CDD" id="cd17875">
    <property type="entry name" value="SRP54_G"/>
    <property type="match status" value="1"/>
</dbReference>
<dbReference type="FunFam" id="3.40.50.300:FF:000022">
    <property type="entry name" value="Signal recognition particle 54 kDa subunit"/>
    <property type="match status" value="1"/>
</dbReference>
<dbReference type="Gene3D" id="3.40.50.300">
    <property type="entry name" value="P-loop containing nucleotide triphosphate hydrolases"/>
    <property type="match status" value="1"/>
</dbReference>
<dbReference type="Gene3D" id="1.20.120.140">
    <property type="entry name" value="Signal recognition particle SRP54, nucleotide-binding domain"/>
    <property type="match status" value="1"/>
</dbReference>
<dbReference type="Gene3D" id="1.10.260.30">
    <property type="entry name" value="Signal recognition particle, SRP54 subunit, M-domain"/>
    <property type="match status" value="1"/>
</dbReference>
<dbReference type="HAMAP" id="MF_00306">
    <property type="entry name" value="SRP54"/>
    <property type="match status" value="1"/>
</dbReference>
<dbReference type="InterPro" id="IPR003593">
    <property type="entry name" value="AAA+_ATPase"/>
</dbReference>
<dbReference type="InterPro" id="IPR027417">
    <property type="entry name" value="P-loop_NTPase"/>
</dbReference>
<dbReference type="InterPro" id="IPR036891">
    <property type="entry name" value="Signal_recog_part_SRP54_M_sf"/>
</dbReference>
<dbReference type="InterPro" id="IPR013822">
    <property type="entry name" value="Signal_recog_particl_SRP54_hlx"/>
</dbReference>
<dbReference type="InterPro" id="IPR004125">
    <property type="entry name" value="Signal_recog_particle_SRP54_M"/>
</dbReference>
<dbReference type="InterPro" id="IPR036225">
    <property type="entry name" value="SRP/SRP_N"/>
</dbReference>
<dbReference type="InterPro" id="IPR022941">
    <property type="entry name" value="SRP54"/>
</dbReference>
<dbReference type="InterPro" id="IPR000897">
    <property type="entry name" value="SRP54_GTPase_dom"/>
</dbReference>
<dbReference type="InterPro" id="IPR042101">
    <property type="entry name" value="SRP54_N_sf"/>
</dbReference>
<dbReference type="PANTHER" id="PTHR11564">
    <property type="entry name" value="SIGNAL RECOGNITION PARTICLE 54K PROTEIN SRP54"/>
    <property type="match status" value="1"/>
</dbReference>
<dbReference type="PANTHER" id="PTHR11564:SF5">
    <property type="entry name" value="SIGNAL RECOGNITION PARTICLE SUBUNIT SRP54"/>
    <property type="match status" value="1"/>
</dbReference>
<dbReference type="Pfam" id="PF00448">
    <property type="entry name" value="SRP54"/>
    <property type="match status" value="1"/>
</dbReference>
<dbReference type="Pfam" id="PF02881">
    <property type="entry name" value="SRP54_N"/>
    <property type="match status" value="1"/>
</dbReference>
<dbReference type="Pfam" id="PF02978">
    <property type="entry name" value="SRP_SPB"/>
    <property type="match status" value="1"/>
</dbReference>
<dbReference type="SMART" id="SM00382">
    <property type="entry name" value="AAA"/>
    <property type="match status" value="1"/>
</dbReference>
<dbReference type="SMART" id="SM00962">
    <property type="entry name" value="SRP54"/>
    <property type="match status" value="1"/>
</dbReference>
<dbReference type="SMART" id="SM00963">
    <property type="entry name" value="SRP54_N"/>
    <property type="match status" value="1"/>
</dbReference>
<dbReference type="SUPFAM" id="SSF47364">
    <property type="entry name" value="Domain of the SRP/SRP receptor G-proteins"/>
    <property type="match status" value="1"/>
</dbReference>
<dbReference type="SUPFAM" id="SSF52540">
    <property type="entry name" value="P-loop containing nucleoside triphosphate hydrolases"/>
    <property type="match status" value="1"/>
</dbReference>
<dbReference type="SUPFAM" id="SSF47446">
    <property type="entry name" value="Signal peptide-binding domain"/>
    <property type="match status" value="1"/>
</dbReference>
<gene>
    <name evidence="1" type="primary">srp54</name>
    <name type="ordered locus">STK_12970</name>
</gene>
<organism>
    <name type="scientific">Sulfurisphaera tokodaii (strain DSM 16993 / JCM 10545 / NBRC 100140 / 7)</name>
    <name type="common">Sulfolobus tokodaii</name>
    <dbReference type="NCBI Taxonomy" id="273063"/>
    <lineage>
        <taxon>Archaea</taxon>
        <taxon>Thermoproteota</taxon>
        <taxon>Thermoprotei</taxon>
        <taxon>Sulfolobales</taxon>
        <taxon>Sulfolobaceae</taxon>
        <taxon>Sulfurisphaera</taxon>
    </lineage>
</organism>